<dbReference type="EC" id="1.15.1.1" evidence="3"/>
<dbReference type="EMBL" id="AM270128">
    <property type="protein sequence ID" value="CAK48127.1"/>
    <property type="molecule type" value="Genomic_DNA"/>
</dbReference>
<dbReference type="RefSeq" id="XP_001391459.1">
    <property type="nucleotide sequence ID" value="XM_001391422.2"/>
</dbReference>
<dbReference type="SMR" id="A2QMY6"/>
<dbReference type="EnsemblFungi" id="CAK48127">
    <property type="protein sequence ID" value="CAK48127"/>
    <property type="gene ID" value="An07g03770"/>
</dbReference>
<dbReference type="GeneID" id="4981643"/>
<dbReference type="KEGG" id="ang:An07g03770"/>
<dbReference type="VEuPathDB" id="FungiDB:An07g03770"/>
<dbReference type="HOGENOM" id="CLU_056632_4_1_1"/>
<dbReference type="Proteomes" id="UP000006706">
    <property type="component" value="Chromosome 4L"/>
</dbReference>
<dbReference type="GO" id="GO:0005829">
    <property type="term" value="C:cytosol"/>
    <property type="evidence" value="ECO:0007669"/>
    <property type="project" value="EnsemblFungi"/>
</dbReference>
<dbReference type="GO" id="GO:0005758">
    <property type="term" value="C:mitochondrial intermembrane space"/>
    <property type="evidence" value="ECO:0007669"/>
    <property type="project" value="EnsemblFungi"/>
</dbReference>
<dbReference type="GO" id="GO:0005634">
    <property type="term" value="C:nucleus"/>
    <property type="evidence" value="ECO:0007669"/>
    <property type="project" value="EnsemblFungi"/>
</dbReference>
<dbReference type="GO" id="GO:1902693">
    <property type="term" value="C:superoxide dismutase complex"/>
    <property type="evidence" value="ECO:0007669"/>
    <property type="project" value="EnsemblFungi"/>
</dbReference>
<dbReference type="GO" id="GO:0005507">
    <property type="term" value="F:copper ion binding"/>
    <property type="evidence" value="ECO:0007669"/>
    <property type="project" value="InterPro"/>
</dbReference>
<dbReference type="GO" id="GO:0016670">
    <property type="term" value="F:oxidoreductase activity, acting on a sulfur group of donors, oxygen as acceptor"/>
    <property type="evidence" value="ECO:0007669"/>
    <property type="project" value="EnsemblFungi"/>
</dbReference>
<dbReference type="GO" id="GO:0004784">
    <property type="term" value="F:superoxide dismutase activity"/>
    <property type="evidence" value="ECO:0007669"/>
    <property type="project" value="UniProtKB-EC"/>
</dbReference>
<dbReference type="GO" id="GO:0045454">
    <property type="term" value="P:cell redox homeostasis"/>
    <property type="evidence" value="ECO:0007669"/>
    <property type="project" value="EnsemblFungi"/>
</dbReference>
<dbReference type="GO" id="GO:0006825">
    <property type="term" value="P:copper ion transport"/>
    <property type="evidence" value="ECO:0007669"/>
    <property type="project" value="EnsemblFungi"/>
</dbReference>
<dbReference type="GO" id="GO:0031505">
    <property type="term" value="P:fungal-type cell wall organization"/>
    <property type="evidence" value="ECO:0007669"/>
    <property type="project" value="EnsemblFungi"/>
</dbReference>
<dbReference type="GO" id="GO:0006878">
    <property type="term" value="P:intracellular copper ion homeostasis"/>
    <property type="evidence" value="ECO:0007669"/>
    <property type="project" value="EnsemblFungi"/>
</dbReference>
<dbReference type="GO" id="GO:0006882">
    <property type="term" value="P:intracellular zinc ion homeostasis"/>
    <property type="evidence" value="ECO:0007669"/>
    <property type="project" value="EnsemblFungi"/>
</dbReference>
<dbReference type="GO" id="GO:1901856">
    <property type="term" value="P:negative regulation of cellular respiration"/>
    <property type="evidence" value="ECO:0007669"/>
    <property type="project" value="EnsemblFungi"/>
</dbReference>
<dbReference type="GO" id="GO:0045944">
    <property type="term" value="P:positive regulation of transcription by RNA polymerase II"/>
    <property type="evidence" value="ECO:0007669"/>
    <property type="project" value="EnsemblFungi"/>
</dbReference>
<dbReference type="GO" id="GO:0050821">
    <property type="term" value="P:protein stabilization"/>
    <property type="evidence" value="ECO:0007669"/>
    <property type="project" value="EnsemblFungi"/>
</dbReference>
<dbReference type="CDD" id="cd00305">
    <property type="entry name" value="Cu-Zn_Superoxide_Dismutase"/>
    <property type="match status" value="1"/>
</dbReference>
<dbReference type="FunFam" id="2.60.40.200:FF:000001">
    <property type="entry name" value="Superoxide dismutase [Cu-Zn]"/>
    <property type="match status" value="1"/>
</dbReference>
<dbReference type="Gene3D" id="2.60.40.200">
    <property type="entry name" value="Superoxide dismutase, copper/zinc binding domain"/>
    <property type="match status" value="1"/>
</dbReference>
<dbReference type="InterPro" id="IPR036423">
    <property type="entry name" value="SOD-like_Cu/Zn_dom_sf"/>
</dbReference>
<dbReference type="InterPro" id="IPR024134">
    <property type="entry name" value="SOD_Cu/Zn_/chaperone"/>
</dbReference>
<dbReference type="InterPro" id="IPR018152">
    <property type="entry name" value="SOD_Cu/Zn_BS"/>
</dbReference>
<dbReference type="InterPro" id="IPR001424">
    <property type="entry name" value="SOD_Cu_Zn_dom"/>
</dbReference>
<dbReference type="PANTHER" id="PTHR10003">
    <property type="entry name" value="SUPEROXIDE DISMUTASE CU-ZN -RELATED"/>
    <property type="match status" value="1"/>
</dbReference>
<dbReference type="Pfam" id="PF00080">
    <property type="entry name" value="Sod_Cu"/>
    <property type="match status" value="1"/>
</dbReference>
<dbReference type="PRINTS" id="PR00068">
    <property type="entry name" value="CUZNDISMTASE"/>
</dbReference>
<dbReference type="SUPFAM" id="SSF49329">
    <property type="entry name" value="Cu,Zn superoxide dismutase-like"/>
    <property type="match status" value="1"/>
</dbReference>
<dbReference type="PROSITE" id="PS00087">
    <property type="entry name" value="SOD_CU_ZN_1"/>
    <property type="match status" value="1"/>
</dbReference>
<dbReference type="PROSITE" id="PS00332">
    <property type="entry name" value="SOD_CU_ZN_2"/>
    <property type="match status" value="1"/>
</dbReference>
<accession>A2QMY6</accession>
<evidence type="ECO:0000250" key="1">
    <source>
        <dbReference type="UniProtKB" id="P00442"/>
    </source>
</evidence>
<evidence type="ECO:0000250" key="2">
    <source>
        <dbReference type="UniProtKB" id="P00445"/>
    </source>
</evidence>
<evidence type="ECO:0000250" key="3">
    <source>
        <dbReference type="UniProtKB" id="P85978"/>
    </source>
</evidence>
<evidence type="ECO:0000250" key="4">
    <source>
        <dbReference type="UniProtKB" id="Q9Y8D9"/>
    </source>
</evidence>
<evidence type="ECO:0000255" key="5"/>
<evidence type="ECO:0000256" key="6">
    <source>
        <dbReference type="SAM" id="MobiDB-lite"/>
    </source>
</evidence>
<evidence type="ECO:0000312" key="7">
    <source>
        <dbReference type="EMBL" id="CAK48127.1"/>
    </source>
</evidence>
<gene>
    <name evidence="4" type="primary">sodC</name>
    <name type="ORF">An07g03770</name>
</gene>
<feature type="initiator methionine" description="Removed" evidence="1">
    <location>
        <position position="1"/>
    </location>
</feature>
<feature type="chain" id="PRO_0000355100" description="Superoxide dismutase [Cu-Zn]" evidence="1">
    <location>
        <begin position="2"/>
        <end position="154"/>
    </location>
</feature>
<feature type="region of interest" description="Disordered" evidence="6">
    <location>
        <begin position="125"/>
        <end position="147"/>
    </location>
</feature>
<feature type="compositionally biased region" description="Basic and acidic residues" evidence="6">
    <location>
        <begin position="125"/>
        <end position="137"/>
    </location>
</feature>
<feature type="binding site" evidence="2">
    <location>
        <position position="47"/>
    </location>
    <ligand>
        <name>Cu cation</name>
        <dbReference type="ChEBI" id="CHEBI:23378"/>
        <note>catalytic</note>
    </ligand>
</feature>
<feature type="binding site" evidence="2">
    <location>
        <position position="49"/>
    </location>
    <ligand>
        <name>Cu cation</name>
        <dbReference type="ChEBI" id="CHEBI:23378"/>
        <note>catalytic</note>
    </ligand>
</feature>
<feature type="binding site" evidence="2">
    <location>
        <position position="64"/>
    </location>
    <ligand>
        <name>Cu cation</name>
        <dbReference type="ChEBI" id="CHEBI:23378"/>
        <note>catalytic</note>
    </ligand>
</feature>
<feature type="binding site" evidence="2">
    <location>
        <position position="64"/>
    </location>
    <ligand>
        <name>Zn(2+)</name>
        <dbReference type="ChEBI" id="CHEBI:29105"/>
        <note>structural</note>
    </ligand>
</feature>
<feature type="binding site" evidence="2">
    <location>
        <position position="72"/>
    </location>
    <ligand>
        <name>Zn(2+)</name>
        <dbReference type="ChEBI" id="CHEBI:29105"/>
        <note>structural</note>
    </ligand>
</feature>
<feature type="binding site" evidence="2">
    <location>
        <position position="81"/>
    </location>
    <ligand>
        <name>Zn(2+)</name>
        <dbReference type="ChEBI" id="CHEBI:29105"/>
        <note>structural</note>
    </ligand>
</feature>
<feature type="binding site" evidence="2">
    <location>
        <position position="84"/>
    </location>
    <ligand>
        <name>Zn(2+)</name>
        <dbReference type="ChEBI" id="CHEBI:29105"/>
        <note>structural</note>
    </ligand>
</feature>
<feature type="binding site" evidence="2">
    <location>
        <position position="121"/>
    </location>
    <ligand>
        <name>Cu cation</name>
        <dbReference type="ChEBI" id="CHEBI:23378"/>
        <note>catalytic</note>
    </ligand>
</feature>
<feature type="binding site" evidence="2">
    <location>
        <position position="144"/>
    </location>
    <ligand>
        <name>substrate</name>
    </ligand>
</feature>
<feature type="disulfide bond" evidence="1">
    <location>
        <begin position="58"/>
        <end position="147"/>
    </location>
</feature>
<sequence>MVKAVAVIRGDSKVSGTVTFEQANENTPTTISWNITGHDANAERGFHVHQFGDNTNGCTSAGPHFNPFGKTHGAPEDDERHVGDLGNFKTDAEGNAVGSKQDKLVKLIGAESVLGRTLVVHAGTDDLGRGGNEESKKTGNAGPRPACGVIGIAA</sequence>
<keyword id="KW-0049">Antioxidant</keyword>
<keyword id="KW-0186">Copper</keyword>
<keyword id="KW-0963">Cytoplasm</keyword>
<keyword id="KW-1015">Disulfide bond</keyword>
<keyword id="KW-0479">Metal-binding</keyword>
<keyword id="KW-0560">Oxidoreductase</keyword>
<keyword id="KW-1185">Reference proteome</keyword>
<keyword id="KW-0862">Zinc</keyword>
<protein>
    <recommendedName>
        <fullName evidence="1">Superoxide dismutase [Cu-Zn]</fullName>
        <ecNumber evidence="3">1.15.1.1</ecNumber>
    </recommendedName>
</protein>
<comment type="function">
    <text evidence="1">Destroys radicals which are normally produced within the cells and which are toxic to biological systems.</text>
</comment>
<comment type="catalytic activity">
    <reaction evidence="3">
        <text>2 superoxide + 2 H(+) = H2O2 + O2</text>
        <dbReference type="Rhea" id="RHEA:20696"/>
        <dbReference type="ChEBI" id="CHEBI:15378"/>
        <dbReference type="ChEBI" id="CHEBI:15379"/>
        <dbReference type="ChEBI" id="CHEBI:16240"/>
        <dbReference type="ChEBI" id="CHEBI:18421"/>
        <dbReference type="EC" id="1.15.1.1"/>
    </reaction>
</comment>
<comment type="cofactor">
    <cofactor evidence="1">
        <name>Cu cation</name>
        <dbReference type="ChEBI" id="CHEBI:23378"/>
    </cofactor>
    <text evidence="1">Binds 1 copper ion per subunit.</text>
</comment>
<comment type="cofactor">
    <cofactor evidence="1">
        <name>Zn(2+)</name>
        <dbReference type="ChEBI" id="CHEBI:29105"/>
    </cofactor>
    <text evidence="1">Binds 1 zinc ion per subunit.</text>
</comment>
<comment type="subunit">
    <text evidence="1">Homodimer.</text>
</comment>
<comment type="subcellular location">
    <subcellularLocation>
        <location evidence="1">Cytoplasm</location>
    </subcellularLocation>
</comment>
<comment type="similarity">
    <text evidence="5">Belongs to the Cu-Zn superoxide dismutase family.</text>
</comment>
<name>SODC_ASPNC</name>
<organism>
    <name type="scientific">Aspergillus niger (strain ATCC MYA-4892 / CBS 513.88 / FGSC A1513)</name>
    <dbReference type="NCBI Taxonomy" id="425011"/>
    <lineage>
        <taxon>Eukaryota</taxon>
        <taxon>Fungi</taxon>
        <taxon>Dikarya</taxon>
        <taxon>Ascomycota</taxon>
        <taxon>Pezizomycotina</taxon>
        <taxon>Eurotiomycetes</taxon>
        <taxon>Eurotiomycetidae</taxon>
        <taxon>Eurotiales</taxon>
        <taxon>Aspergillaceae</taxon>
        <taxon>Aspergillus</taxon>
        <taxon>Aspergillus subgen. Circumdati</taxon>
    </lineage>
</organism>
<proteinExistence type="inferred from homology"/>
<reference evidence="7" key="1">
    <citation type="journal article" date="2007" name="Nat. Biotechnol.">
        <title>Genome sequencing and analysis of the versatile cell factory Aspergillus niger CBS 513.88.</title>
        <authorList>
            <person name="Pel H.J."/>
            <person name="de Winde J.H."/>
            <person name="Archer D.B."/>
            <person name="Dyer P.S."/>
            <person name="Hofmann G."/>
            <person name="Schaap P.J."/>
            <person name="Turner G."/>
            <person name="de Vries R.P."/>
            <person name="Albang R."/>
            <person name="Albermann K."/>
            <person name="Andersen M.R."/>
            <person name="Bendtsen J.D."/>
            <person name="Benen J.A.E."/>
            <person name="van den Berg M."/>
            <person name="Breestraat S."/>
            <person name="Caddick M.X."/>
            <person name="Contreras R."/>
            <person name="Cornell M."/>
            <person name="Coutinho P.M."/>
            <person name="Danchin E.G.J."/>
            <person name="Debets A.J.M."/>
            <person name="Dekker P."/>
            <person name="van Dijck P.W.M."/>
            <person name="van Dijk A."/>
            <person name="Dijkhuizen L."/>
            <person name="Driessen A.J.M."/>
            <person name="d'Enfert C."/>
            <person name="Geysens S."/>
            <person name="Goosen C."/>
            <person name="Groot G.S.P."/>
            <person name="de Groot P.W.J."/>
            <person name="Guillemette T."/>
            <person name="Henrissat B."/>
            <person name="Herweijer M."/>
            <person name="van den Hombergh J.P.T.W."/>
            <person name="van den Hondel C.A.M.J.J."/>
            <person name="van der Heijden R.T.J.M."/>
            <person name="van der Kaaij R.M."/>
            <person name="Klis F.M."/>
            <person name="Kools H.J."/>
            <person name="Kubicek C.P."/>
            <person name="van Kuyk P.A."/>
            <person name="Lauber J."/>
            <person name="Lu X."/>
            <person name="van der Maarel M.J.E.C."/>
            <person name="Meulenberg R."/>
            <person name="Menke H."/>
            <person name="Mortimer M.A."/>
            <person name="Nielsen J."/>
            <person name="Oliver S.G."/>
            <person name="Olsthoorn M."/>
            <person name="Pal K."/>
            <person name="van Peij N.N.M.E."/>
            <person name="Ram A.F.J."/>
            <person name="Rinas U."/>
            <person name="Roubos J.A."/>
            <person name="Sagt C.M.J."/>
            <person name="Schmoll M."/>
            <person name="Sun J."/>
            <person name="Ussery D."/>
            <person name="Varga J."/>
            <person name="Vervecken W."/>
            <person name="van de Vondervoort P.J.J."/>
            <person name="Wedler H."/>
            <person name="Woesten H.A.B."/>
            <person name="Zeng A.-P."/>
            <person name="van Ooyen A.J.J."/>
            <person name="Visser J."/>
            <person name="Stam H."/>
        </authorList>
    </citation>
    <scope>NUCLEOTIDE SEQUENCE [LARGE SCALE GENOMIC DNA]</scope>
    <source>
        <strain>ATCC MYA-4892 / CBS 513.88 / FGSC A1513</strain>
    </source>
</reference>